<keyword id="KW-0238">DNA-binding</keyword>
<keyword id="KW-1185">Reference proteome</keyword>
<keyword id="KW-0678">Repressor</keyword>
<keyword id="KW-0346">Stress response</keyword>
<keyword id="KW-0804">Transcription</keyword>
<keyword id="KW-0805">Transcription regulation</keyword>
<accession>Q2G0P8</accession>
<evidence type="ECO:0000269" key="1">
    <source>
    </source>
</evidence>
<evidence type="ECO:0000269" key="2">
    <source>
    </source>
</evidence>
<evidence type="ECO:0000305" key="3"/>
<reference key="1">
    <citation type="book" date="2006" name="Gram positive pathogens, 2nd edition">
        <title>The Staphylococcus aureus NCTC 8325 genome.</title>
        <editorList>
            <person name="Fischetti V."/>
            <person name="Novick R."/>
            <person name="Ferretti J."/>
            <person name="Portnoy D."/>
            <person name="Rood J."/>
        </editorList>
        <authorList>
            <person name="Gillaspy A.F."/>
            <person name="Worrell V."/>
            <person name="Orvis J."/>
            <person name="Roe B.A."/>
            <person name="Dyer D.W."/>
            <person name="Iandolo J.J."/>
        </authorList>
    </citation>
    <scope>NUCLEOTIDE SEQUENCE [LARGE SCALE GENOMIC DNA]</scope>
    <source>
        <strain>NCTC 8325 / PS 47</strain>
    </source>
</reference>
<reference key="2">
    <citation type="journal article" date="2004" name="Mol. Microbiol.">
        <title>Clp ATPases are required for stress tolerance, intracellular replication and biofilm formation in Staphylococcus aureus.</title>
        <authorList>
            <person name="Frees D."/>
            <person name="Chastanet A."/>
            <person name="Qazi S."/>
            <person name="Soerensen K."/>
            <person name="Hill P."/>
            <person name="Msadek T."/>
            <person name="Ingmer H."/>
        </authorList>
    </citation>
    <scope>FUNCTION</scope>
</reference>
<reference key="3">
    <citation type="journal article" date="2012" name="FEMS Microbiol. Lett.">
        <title>McsA and the roles of metal-binding motif in Staphylococcus aureus.</title>
        <authorList>
            <person name="Sitthisak S."/>
            <person name="Kitti T."/>
            <person name="Boonyonying K."/>
            <person name="Wozniak D."/>
            <person name="Mongkolsuk S."/>
            <person name="Jayaswal R.K."/>
        </authorList>
    </citation>
    <scope>INDUCTION</scope>
    <scope>INTERACTION WITH MCSA AND MCSB</scope>
    <source>
        <strain>SH1000</strain>
    </source>
</reference>
<gene>
    <name type="primary">ctsR</name>
    <name type="ordered locus">SAOUHSC_00502</name>
</gene>
<comment type="function">
    <text evidence="1">Negative regulator of clpC, clpB and clpP transcription by binding directly and specifically to their promoter region.</text>
</comment>
<comment type="subunit">
    <text evidence="2">Interacts with McsA and McsB.</text>
</comment>
<comment type="induction">
    <text evidence="2">Up-regulated by heavy metals such as Cu(2+) and Cd(2+), but Zn(2+) and Co(2+) have no effect. Forms part of an operon with mcsA, mcsB and clpC.</text>
</comment>
<comment type="similarity">
    <text evidence="3">Belongs to the CtsR family.</text>
</comment>
<name>CTSR_STAA8</name>
<feature type="chain" id="PRO_0000274128" description="Transcriptional regulator CtsR">
    <location>
        <begin position="1"/>
        <end position="153"/>
    </location>
</feature>
<proteinExistence type="evidence at protein level"/>
<protein>
    <recommendedName>
        <fullName>Transcriptional regulator CtsR</fullName>
    </recommendedName>
</protein>
<sequence length="153" mass="17842">MHNMSDIIEQYIKRLFEESNEDVVEIQRANIAQRFDCVPSQLNYVIKTRFTNEHGYEIESKRGGGGYIRITKIENKDATGYINHLLQLIGPSISQQQAYYIIDGLLDKMLINEREAKMIQAVIDRETLSMDMVSRDIIRANILKRLLPVINYY</sequence>
<organism>
    <name type="scientific">Staphylococcus aureus (strain NCTC 8325 / PS 47)</name>
    <dbReference type="NCBI Taxonomy" id="93061"/>
    <lineage>
        <taxon>Bacteria</taxon>
        <taxon>Bacillati</taxon>
        <taxon>Bacillota</taxon>
        <taxon>Bacilli</taxon>
        <taxon>Bacillales</taxon>
        <taxon>Staphylococcaceae</taxon>
        <taxon>Staphylococcus</taxon>
    </lineage>
</organism>
<dbReference type="EMBL" id="CP000253">
    <property type="protein sequence ID" value="ABD29651.1"/>
    <property type="molecule type" value="Genomic_DNA"/>
</dbReference>
<dbReference type="RefSeq" id="WP_000551762.1">
    <property type="nucleotide sequence ID" value="NZ_LS483365.1"/>
</dbReference>
<dbReference type="RefSeq" id="YP_499075.1">
    <property type="nucleotide sequence ID" value="NC_007795.1"/>
</dbReference>
<dbReference type="SMR" id="Q2G0P8"/>
<dbReference type="STRING" id="93061.SAOUHSC_00502"/>
<dbReference type="PaxDb" id="1280-SAXN108_0575"/>
<dbReference type="GeneID" id="3920414"/>
<dbReference type="KEGG" id="sao:SAOUHSC_00502"/>
<dbReference type="PATRIC" id="fig|93061.5.peg.449"/>
<dbReference type="eggNOG" id="COG4463">
    <property type="taxonomic scope" value="Bacteria"/>
</dbReference>
<dbReference type="HOGENOM" id="CLU_118139_0_0_9"/>
<dbReference type="OrthoDB" id="1680813at2"/>
<dbReference type="PRO" id="PR:Q2G0P8"/>
<dbReference type="Proteomes" id="UP000008816">
    <property type="component" value="Chromosome"/>
</dbReference>
<dbReference type="GO" id="GO:0003677">
    <property type="term" value="F:DNA binding"/>
    <property type="evidence" value="ECO:0007669"/>
    <property type="project" value="UniProtKB-KW"/>
</dbReference>
<dbReference type="GO" id="GO:0006355">
    <property type="term" value="P:regulation of DNA-templated transcription"/>
    <property type="evidence" value="ECO:0007669"/>
    <property type="project" value="InterPro"/>
</dbReference>
<dbReference type="GO" id="GO:1990170">
    <property type="term" value="P:stress response to cadmium ion"/>
    <property type="evidence" value="ECO:0000314"/>
    <property type="project" value="UniProtKB"/>
</dbReference>
<dbReference type="GO" id="GO:1990169">
    <property type="term" value="P:stress response to copper ion"/>
    <property type="evidence" value="ECO:0000314"/>
    <property type="project" value="UniProtKB"/>
</dbReference>
<dbReference type="FunFam" id="1.10.1200.150:FF:000002">
    <property type="entry name" value="Transcriptional regulator CtsR"/>
    <property type="match status" value="1"/>
</dbReference>
<dbReference type="FunFam" id="3.30.56.130:FF:000001">
    <property type="entry name" value="Transcriptional regulator CtsR"/>
    <property type="match status" value="1"/>
</dbReference>
<dbReference type="Gene3D" id="1.10.1200.150">
    <property type="entry name" value="Transcriptional regulator CtsR, C-terminal domain"/>
    <property type="match status" value="1"/>
</dbReference>
<dbReference type="Gene3D" id="3.30.56.130">
    <property type="entry name" value="Transcriptional regulator CtsR, winged HTH domain"/>
    <property type="match status" value="1"/>
</dbReference>
<dbReference type="InterPro" id="IPR008463">
    <property type="entry name" value="CtsR"/>
</dbReference>
<dbReference type="InterPro" id="IPR041473">
    <property type="entry name" value="CtsR_C"/>
</dbReference>
<dbReference type="InterPro" id="IPR041908">
    <property type="entry name" value="CtsR_C_sf"/>
</dbReference>
<dbReference type="InterPro" id="IPR040465">
    <property type="entry name" value="CtsR_N"/>
</dbReference>
<dbReference type="InterPro" id="IPR041902">
    <property type="entry name" value="CtsR_N_sf"/>
</dbReference>
<dbReference type="Pfam" id="PF05848">
    <property type="entry name" value="CtsR"/>
    <property type="match status" value="1"/>
</dbReference>
<dbReference type="Pfam" id="PF17727">
    <property type="entry name" value="CtsR_C"/>
    <property type="match status" value="1"/>
</dbReference>
<dbReference type="PIRSF" id="PIRSF010607">
    <property type="entry name" value="Txn_repr_CtsR"/>
    <property type="match status" value="1"/>
</dbReference>